<organism>
    <name type="scientific">Drosophila simulans</name>
    <name type="common">Fruit fly</name>
    <dbReference type="NCBI Taxonomy" id="7240"/>
    <lineage>
        <taxon>Eukaryota</taxon>
        <taxon>Metazoa</taxon>
        <taxon>Ecdysozoa</taxon>
        <taxon>Arthropoda</taxon>
        <taxon>Hexapoda</taxon>
        <taxon>Insecta</taxon>
        <taxon>Pterygota</taxon>
        <taxon>Neoptera</taxon>
        <taxon>Endopterygota</taxon>
        <taxon>Diptera</taxon>
        <taxon>Brachycera</taxon>
        <taxon>Muscomorpha</taxon>
        <taxon>Ephydroidea</taxon>
        <taxon>Drosophilidae</taxon>
        <taxon>Drosophila</taxon>
        <taxon>Sophophora</taxon>
    </lineage>
</organism>
<feature type="signal peptide" evidence="3">
    <location>
        <begin position="1"/>
        <end position="21"/>
    </location>
</feature>
<feature type="chain" id="PRO_0000355139" description="Protein Turandot A1">
    <location>
        <begin position="22"/>
        <end position="129"/>
    </location>
</feature>
<feature type="glycosylation site" description="N-linked (GlcNAc...) asparagine" evidence="3">
    <location>
        <position position="49"/>
    </location>
</feature>
<sequence length="129" mass="14193">MNSSTALMCFALLLISPLCMGYSDEDREADSRRIGEIIQNAQDDDSKINSTQELLDIYRRLYPSLSLEDRENIDKFVNEHTDAIVIDGVPIQGGRKAKIIGKIVSPAAKGLAVGFFEELGSKIAQLFTG</sequence>
<name>TOTA1_DROSI</name>
<accession>B4R1Q4</accession>
<protein>
    <recommendedName>
        <fullName>Protein Turandot A1</fullName>
    </recommendedName>
</protein>
<proteinExistence type="inferred from homology"/>
<gene>
    <name type="primary">TotA1</name>
    <name type="ORF">GD19382</name>
</gene>
<keyword id="KW-0044">Antibiotic</keyword>
<keyword id="KW-0929">Antimicrobial</keyword>
<keyword id="KW-0325">Glycoprotein</keyword>
<keyword id="KW-0391">Immunity</keyword>
<keyword id="KW-0399">Innate immunity</keyword>
<keyword id="KW-1185">Reference proteome</keyword>
<keyword id="KW-0964">Secreted</keyword>
<keyword id="KW-0732">Signal</keyword>
<comment type="function">
    <text evidence="2">A humoral factor that plays a role in stress tolerance; gives increased resistance to the lethal effects of bacterial challenge and stress. Regulated by the JAK/STAT pathway and NF-KB-like Relish pathway in the fat body, upd3 in the hemocytes and Mekk1 in response to septic injury and consequent immune response (By similarity).</text>
</comment>
<comment type="subcellular location">
    <subcellularLocation>
        <location evidence="2">Secreted</location>
    </subcellularLocation>
    <text evidence="1">Secreted from the fat body into the hemolymph.</text>
</comment>
<comment type="similarity">
    <text evidence="4">Belongs to the Turandot family.</text>
</comment>
<reference evidence="5" key="1">
    <citation type="journal article" date="2007" name="Nature">
        <title>Evolution of genes and genomes on the Drosophila phylogeny.</title>
        <authorList>
            <consortium name="Drosophila 12 genomes consortium"/>
        </authorList>
    </citation>
    <scope>NUCLEOTIDE SEQUENCE [LARGE SCALE GENOMIC DNA]</scope>
</reference>
<dbReference type="EMBL" id="CM000364">
    <property type="protein sequence ID" value="EDX12163.1"/>
    <property type="molecule type" value="Genomic_DNA"/>
</dbReference>
<dbReference type="SMR" id="B4R1Q4"/>
<dbReference type="STRING" id="7240.B4R1Q4"/>
<dbReference type="GlyCosmos" id="B4R1Q4">
    <property type="glycosylation" value="1 site, No reported glycans"/>
</dbReference>
<dbReference type="EnsemblMetazoa" id="FBtr0219292">
    <property type="protein sequence ID" value="FBpp0217784"/>
    <property type="gene ID" value="FBgn0190883"/>
</dbReference>
<dbReference type="EnsemblMetazoa" id="XM_002102624.3">
    <property type="protein sequence ID" value="XP_002102660.1"/>
    <property type="gene ID" value="LOC6727271"/>
</dbReference>
<dbReference type="GeneID" id="6727271"/>
<dbReference type="KEGG" id="dsi:Dsimw501_GD19382"/>
<dbReference type="HOGENOM" id="CLU_152780_0_0_1"/>
<dbReference type="OMA" id="CCAYSDA"/>
<dbReference type="OrthoDB" id="7861285at2759"/>
<dbReference type="PhylomeDB" id="B4R1Q4"/>
<dbReference type="Proteomes" id="UP000000304">
    <property type="component" value="Chromosome 3R"/>
</dbReference>
<dbReference type="Bgee" id="FBgn0190883">
    <property type="expression patterns" value="Expressed in adult organism and 2 other cell types or tissues"/>
</dbReference>
<dbReference type="GO" id="GO:0005615">
    <property type="term" value="C:extracellular space"/>
    <property type="evidence" value="ECO:0000250"/>
    <property type="project" value="UniProtKB"/>
</dbReference>
<dbReference type="GO" id="GO:0034605">
    <property type="term" value="P:cellular response to heat"/>
    <property type="evidence" value="ECO:0007669"/>
    <property type="project" value="UniProtKB-ARBA"/>
</dbReference>
<dbReference type="GO" id="GO:0042742">
    <property type="term" value="P:defense response to bacterium"/>
    <property type="evidence" value="ECO:0007669"/>
    <property type="project" value="UniProtKB-KW"/>
</dbReference>
<dbReference type="GO" id="GO:0045087">
    <property type="term" value="P:innate immune response"/>
    <property type="evidence" value="ECO:0007669"/>
    <property type="project" value="UniProtKB-KW"/>
</dbReference>
<dbReference type="GO" id="GO:0009617">
    <property type="term" value="P:response to bacterium"/>
    <property type="evidence" value="ECO:0000250"/>
    <property type="project" value="UniProtKB"/>
</dbReference>
<dbReference type="GO" id="GO:0009409">
    <property type="term" value="P:response to cold"/>
    <property type="evidence" value="ECO:0000250"/>
    <property type="project" value="UniProtKB"/>
</dbReference>
<dbReference type="GO" id="GO:0009408">
    <property type="term" value="P:response to heat"/>
    <property type="evidence" value="ECO:0000250"/>
    <property type="project" value="UniProtKB"/>
</dbReference>
<dbReference type="GO" id="GO:0009612">
    <property type="term" value="P:response to mechanical stimulus"/>
    <property type="evidence" value="ECO:0000250"/>
    <property type="project" value="UniProtKB"/>
</dbReference>
<dbReference type="GO" id="GO:0006979">
    <property type="term" value="P:response to oxidative stress"/>
    <property type="evidence" value="ECO:0000250"/>
    <property type="project" value="UniProtKB"/>
</dbReference>
<dbReference type="GO" id="GO:0009411">
    <property type="term" value="P:response to UV"/>
    <property type="evidence" value="ECO:0000250"/>
    <property type="project" value="UniProtKB"/>
</dbReference>
<dbReference type="GO" id="GO:0009414">
    <property type="term" value="P:response to water deprivation"/>
    <property type="evidence" value="ECO:0000250"/>
    <property type="project" value="UniProtKB"/>
</dbReference>
<dbReference type="InterPro" id="IPR010825">
    <property type="entry name" value="Turandot"/>
</dbReference>
<dbReference type="Pfam" id="PF07240">
    <property type="entry name" value="Turandot"/>
    <property type="match status" value="1"/>
</dbReference>
<evidence type="ECO:0000250" key="1"/>
<evidence type="ECO:0000250" key="2">
    <source>
        <dbReference type="UniProtKB" id="Q8IN44"/>
    </source>
</evidence>
<evidence type="ECO:0000255" key="3"/>
<evidence type="ECO:0000305" key="4"/>
<evidence type="ECO:0000312" key="5">
    <source>
        <dbReference type="EMBL" id="EDX12163.1"/>
    </source>
</evidence>